<reference key="1">
    <citation type="journal article" date="2003" name="Nat. Genet.">
        <title>Comparative analysis of the genome sequences of Bordetella pertussis, Bordetella parapertussis and Bordetella bronchiseptica.</title>
        <authorList>
            <person name="Parkhill J."/>
            <person name="Sebaihia M."/>
            <person name="Preston A."/>
            <person name="Murphy L.D."/>
            <person name="Thomson N.R."/>
            <person name="Harris D.E."/>
            <person name="Holden M.T.G."/>
            <person name="Churcher C.M."/>
            <person name="Bentley S.D."/>
            <person name="Mungall K.L."/>
            <person name="Cerdeno-Tarraga A.-M."/>
            <person name="Temple L."/>
            <person name="James K.D."/>
            <person name="Harris B."/>
            <person name="Quail M.A."/>
            <person name="Achtman M."/>
            <person name="Atkin R."/>
            <person name="Baker S."/>
            <person name="Basham D."/>
            <person name="Bason N."/>
            <person name="Cherevach I."/>
            <person name="Chillingworth T."/>
            <person name="Collins M."/>
            <person name="Cronin A."/>
            <person name="Davis P."/>
            <person name="Doggett J."/>
            <person name="Feltwell T."/>
            <person name="Goble A."/>
            <person name="Hamlin N."/>
            <person name="Hauser H."/>
            <person name="Holroyd S."/>
            <person name="Jagels K."/>
            <person name="Leather S."/>
            <person name="Moule S."/>
            <person name="Norberczak H."/>
            <person name="O'Neil S."/>
            <person name="Ormond D."/>
            <person name="Price C."/>
            <person name="Rabbinowitsch E."/>
            <person name="Rutter S."/>
            <person name="Sanders M."/>
            <person name="Saunders D."/>
            <person name="Seeger K."/>
            <person name="Sharp S."/>
            <person name="Simmonds M."/>
            <person name="Skelton J."/>
            <person name="Squares R."/>
            <person name="Squares S."/>
            <person name="Stevens K."/>
            <person name="Unwin L."/>
            <person name="Whitehead S."/>
            <person name="Barrell B.G."/>
            <person name="Maskell D.J."/>
        </authorList>
    </citation>
    <scope>NUCLEOTIDE SEQUENCE [LARGE SCALE GENOMIC DNA]</scope>
    <source>
        <strain>Tohama I / ATCC BAA-589 / NCTC 13251</strain>
    </source>
</reference>
<sequence>MSNGTIVQCIGAVVDIQFPRDNMPKIYEALTLVDEGSSFAEKGLTLEVQQQLGDGVVRTIALGSSDGLRRGMQVAGTGAPISVPVGHGTLGRIMDVLGRPIDEAGPIASDEKRAIHQPAPRFDELSPSVELLETGIKVIDLVCPFAKGGKVGLFGGAGVGKTVNMMELINNIAKQHSGLSVFAGVGERTREGNDFYHEMEESNVLDKVAMVFGQMNEPPGNRLRVALTGLTMAEKFRDEGRDILFFVDNIYRYTLAGTEVSALLGRMPSAVGYQPTLAEEMGVLQERITSTKTGSITSIQAVYVPADDLTDPSPATTFQHLDSTVVLSRDIAALGIYPAVDPLDSSSRQLDPQVVGEEHYQVARGVQQTLQRYKELRDIIAILGMDELSPEDKQAVARARKIQRFLSQPFYVAEVFTGSPGKYVSLAETIRGFKMIVDGECDALPEQAFYMVGTIDEAFEKAKKLQ</sequence>
<evidence type="ECO:0000255" key="1">
    <source>
        <dbReference type="HAMAP-Rule" id="MF_01347"/>
    </source>
</evidence>
<organism>
    <name type="scientific">Bordetella pertussis (strain Tohama I / ATCC BAA-589 / NCTC 13251)</name>
    <dbReference type="NCBI Taxonomy" id="257313"/>
    <lineage>
        <taxon>Bacteria</taxon>
        <taxon>Pseudomonadati</taxon>
        <taxon>Pseudomonadota</taxon>
        <taxon>Betaproteobacteria</taxon>
        <taxon>Burkholderiales</taxon>
        <taxon>Alcaligenaceae</taxon>
        <taxon>Bordetella</taxon>
    </lineage>
</organism>
<proteinExistence type="inferred from homology"/>
<name>ATPB_BORPE</name>
<comment type="function">
    <text evidence="1">Produces ATP from ADP in the presence of a proton gradient across the membrane. The catalytic sites are hosted primarily by the beta subunits.</text>
</comment>
<comment type="catalytic activity">
    <reaction evidence="1">
        <text>ATP + H2O + 4 H(+)(in) = ADP + phosphate + 5 H(+)(out)</text>
        <dbReference type="Rhea" id="RHEA:57720"/>
        <dbReference type="ChEBI" id="CHEBI:15377"/>
        <dbReference type="ChEBI" id="CHEBI:15378"/>
        <dbReference type="ChEBI" id="CHEBI:30616"/>
        <dbReference type="ChEBI" id="CHEBI:43474"/>
        <dbReference type="ChEBI" id="CHEBI:456216"/>
        <dbReference type="EC" id="7.1.2.2"/>
    </reaction>
</comment>
<comment type="subunit">
    <text evidence="1">F-type ATPases have 2 components, CF(1) - the catalytic core - and CF(0) - the membrane proton channel. CF(1) has five subunits: alpha(3), beta(3), gamma(1), delta(1), epsilon(1). CF(0) has three main subunits: a(1), b(2) and c(9-12). The alpha and beta chains form an alternating ring which encloses part of the gamma chain. CF(1) is attached to CF(0) by a central stalk formed by the gamma and epsilon chains, while a peripheral stalk is formed by the delta and b chains.</text>
</comment>
<comment type="subcellular location">
    <subcellularLocation>
        <location evidence="1">Cell inner membrane</location>
        <topology evidence="1">Peripheral membrane protein</topology>
    </subcellularLocation>
</comment>
<comment type="similarity">
    <text evidence="1">Belongs to the ATPase alpha/beta chains family.</text>
</comment>
<feature type="chain" id="PRO_0000254224" description="ATP synthase subunit beta">
    <location>
        <begin position="1"/>
        <end position="466"/>
    </location>
</feature>
<feature type="binding site" evidence="1">
    <location>
        <begin position="155"/>
        <end position="162"/>
    </location>
    <ligand>
        <name>ATP</name>
        <dbReference type="ChEBI" id="CHEBI:30616"/>
    </ligand>
</feature>
<gene>
    <name evidence="1" type="primary">atpD</name>
    <name type="ordered locus">BP3288</name>
</gene>
<protein>
    <recommendedName>
        <fullName evidence="1">ATP synthase subunit beta</fullName>
        <ecNumber evidence="1">7.1.2.2</ecNumber>
    </recommendedName>
    <alternativeName>
        <fullName evidence="1">ATP synthase F1 sector subunit beta</fullName>
    </alternativeName>
    <alternativeName>
        <fullName evidence="1">F-ATPase subunit beta</fullName>
    </alternativeName>
</protein>
<accession>Q7VU44</accession>
<keyword id="KW-0066">ATP synthesis</keyword>
<keyword id="KW-0067">ATP-binding</keyword>
<keyword id="KW-0997">Cell inner membrane</keyword>
<keyword id="KW-1003">Cell membrane</keyword>
<keyword id="KW-0139">CF(1)</keyword>
<keyword id="KW-0375">Hydrogen ion transport</keyword>
<keyword id="KW-0406">Ion transport</keyword>
<keyword id="KW-0472">Membrane</keyword>
<keyword id="KW-0547">Nucleotide-binding</keyword>
<keyword id="KW-1185">Reference proteome</keyword>
<keyword id="KW-1278">Translocase</keyword>
<keyword id="KW-0813">Transport</keyword>
<dbReference type="EC" id="7.1.2.2" evidence="1"/>
<dbReference type="EMBL" id="BX640421">
    <property type="protein sequence ID" value="CAE43553.1"/>
    <property type="molecule type" value="Genomic_DNA"/>
</dbReference>
<dbReference type="RefSeq" id="NP_881830.1">
    <property type="nucleotide sequence ID" value="NC_002929.2"/>
</dbReference>
<dbReference type="RefSeq" id="WP_010931387.1">
    <property type="nucleotide sequence ID" value="NZ_CP039022.1"/>
</dbReference>
<dbReference type="SMR" id="Q7VU44"/>
<dbReference type="STRING" id="257313.BP3288"/>
<dbReference type="PaxDb" id="257313-BP3288"/>
<dbReference type="GeneID" id="69603214"/>
<dbReference type="KEGG" id="bpe:BP3288"/>
<dbReference type="PATRIC" id="fig|257313.5.peg.3560"/>
<dbReference type="eggNOG" id="COG0055">
    <property type="taxonomic scope" value="Bacteria"/>
</dbReference>
<dbReference type="HOGENOM" id="CLU_022398_0_2_4"/>
<dbReference type="Proteomes" id="UP000002676">
    <property type="component" value="Chromosome"/>
</dbReference>
<dbReference type="GO" id="GO:0005886">
    <property type="term" value="C:plasma membrane"/>
    <property type="evidence" value="ECO:0007669"/>
    <property type="project" value="UniProtKB-SubCell"/>
</dbReference>
<dbReference type="GO" id="GO:0045259">
    <property type="term" value="C:proton-transporting ATP synthase complex"/>
    <property type="evidence" value="ECO:0007669"/>
    <property type="project" value="UniProtKB-KW"/>
</dbReference>
<dbReference type="GO" id="GO:0005524">
    <property type="term" value="F:ATP binding"/>
    <property type="evidence" value="ECO:0007669"/>
    <property type="project" value="UniProtKB-UniRule"/>
</dbReference>
<dbReference type="GO" id="GO:0016887">
    <property type="term" value="F:ATP hydrolysis activity"/>
    <property type="evidence" value="ECO:0007669"/>
    <property type="project" value="InterPro"/>
</dbReference>
<dbReference type="GO" id="GO:0046933">
    <property type="term" value="F:proton-transporting ATP synthase activity, rotational mechanism"/>
    <property type="evidence" value="ECO:0007669"/>
    <property type="project" value="UniProtKB-UniRule"/>
</dbReference>
<dbReference type="CDD" id="cd18110">
    <property type="entry name" value="ATP-synt_F1_beta_C"/>
    <property type="match status" value="1"/>
</dbReference>
<dbReference type="CDD" id="cd18115">
    <property type="entry name" value="ATP-synt_F1_beta_N"/>
    <property type="match status" value="1"/>
</dbReference>
<dbReference type="CDD" id="cd01133">
    <property type="entry name" value="F1-ATPase_beta_CD"/>
    <property type="match status" value="1"/>
</dbReference>
<dbReference type="FunFam" id="1.10.1140.10:FF:000001">
    <property type="entry name" value="ATP synthase subunit beta"/>
    <property type="match status" value="1"/>
</dbReference>
<dbReference type="FunFam" id="3.40.50.300:FF:000004">
    <property type="entry name" value="ATP synthase subunit beta"/>
    <property type="match status" value="1"/>
</dbReference>
<dbReference type="Gene3D" id="2.40.10.170">
    <property type="match status" value="1"/>
</dbReference>
<dbReference type="Gene3D" id="1.10.1140.10">
    <property type="entry name" value="Bovine Mitochondrial F1-atpase, Atp Synthase Beta Chain, Chain D, domain 3"/>
    <property type="match status" value="1"/>
</dbReference>
<dbReference type="Gene3D" id="3.40.50.300">
    <property type="entry name" value="P-loop containing nucleotide triphosphate hydrolases"/>
    <property type="match status" value="1"/>
</dbReference>
<dbReference type="HAMAP" id="MF_01347">
    <property type="entry name" value="ATP_synth_beta_bact"/>
    <property type="match status" value="1"/>
</dbReference>
<dbReference type="InterPro" id="IPR003593">
    <property type="entry name" value="AAA+_ATPase"/>
</dbReference>
<dbReference type="InterPro" id="IPR055190">
    <property type="entry name" value="ATP-synt_VA_C"/>
</dbReference>
<dbReference type="InterPro" id="IPR005722">
    <property type="entry name" value="ATP_synth_F1_bsu"/>
</dbReference>
<dbReference type="InterPro" id="IPR020003">
    <property type="entry name" value="ATPase_a/bsu_AS"/>
</dbReference>
<dbReference type="InterPro" id="IPR050053">
    <property type="entry name" value="ATPase_alpha/beta_chains"/>
</dbReference>
<dbReference type="InterPro" id="IPR004100">
    <property type="entry name" value="ATPase_F1/V1/A1_a/bsu_N"/>
</dbReference>
<dbReference type="InterPro" id="IPR036121">
    <property type="entry name" value="ATPase_F1/V1/A1_a/bsu_N_sf"/>
</dbReference>
<dbReference type="InterPro" id="IPR000194">
    <property type="entry name" value="ATPase_F1/V1/A1_a/bsu_nucl-bd"/>
</dbReference>
<dbReference type="InterPro" id="IPR024034">
    <property type="entry name" value="ATPase_F1/V1_b/a_C"/>
</dbReference>
<dbReference type="InterPro" id="IPR027417">
    <property type="entry name" value="P-loop_NTPase"/>
</dbReference>
<dbReference type="NCBIfam" id="TIGR01039">
    <property type="entry name" value="atpD"/>
    <property type="match status" value="1"/>
</dbReference>
<dbReference type="PANTHER" id="PTHR15184">
    <property type="entry name" value="ATP SYNTHASE"/>
    <property type="match status" value="1"/>
</dbReference>
<dbReference type="PANTHER" id="PTHR15184:SF71">
    <property type="entry name" value="ATP SYNTHASE SUBUNIT BETA, MITOCHONDRIAL"/>
    <property type="match status" value="1"/>
</dbReference>
<dbReference type="Pfam" id="PF00006">
    <property type="entry name" value="ATP-synt_ab"/>
    <property type="match status" value="1"/>
</dbReference>
<dbReference type="Pfam" id="PF02874">
    <property type="entry name" value="ATP-synt_ab_N"/>
    <property type="match status" value="1"/>
</dbReference>
<dbReference type="Pfam" id="PF22919">
    <property type="entry name" value="ATP-synt_VA_C"/>
    <property type="match status" value="1"/>
</dbReference>
<dbReference type="SMART" id="SM00382">
    <property type="entry name" value="AAA"/>
    <property type="match status" value="1"/>
</dbReference>
<dbReference type="SUPFAM" id="SSF47917">
    <property type="entry name" value="C-terminal domain of alpha and beta subunits of F1 ATP synthase"/>
    <property type="match status" value="1"/>
</dbReference>
<dbReference type="SUPFAM" id="SSF50615">
    <property type="entry name" value="N-terminal domain of alpha and beta subunits of F1 ATP synthase"/>
    <property type="match status" value="1"/>
</dbReference>
<dbReference type="SUPFAM" id="SSF52540">
    <property type="entry name" value="P-loop containing nucleoside triphosphate hydrolases"/>
    <property type="match status" value="1"/>
</dbReference>
<dbReference type="PROSITE" id="PS00152">
    <property type="entry name" value="ATPASE_ALPHA_BETA"/>
    <property type="match status" value="1"/>
</dbReference>